<evidence type="ECO:0000250" key="1"/>
<evidence type="ECO:0000255" key="2">
    <source>
        <dbReference type="PROSITE-ProRule" id="PRU01024"/>
    </source>
</evidence>
<accession>Q8U2K7</accession>
<comment type="function">
    <text evidence="1">Catalyzes the formation of 5-methyl-uridine at position equivalent to 747 (m5U747) in 23S rRNA.</text>
</comment>
<comment type="catalytic activity">
    <reaction>
        <text>uridine(747) in 23S rRNA + S-adenosyl-L-methionine = 5-methyluridine(747) in 23S rRNA + S-adenosyl-L-homocysteine + H(+)</text>
        <dbReference type="Rhea" id="RHEA:42628"/>
        <dbReference type="Rhea" id="RHEA-COMP:10154"/>
        <dbReference type="Rhea" id="RHEA-COMP:10155"/>
        <dbReference type="ChEBI" id="CHEBI:15378"/>
        <dbReference type="ChEBI" id="CHEBI:57856"/>
        <dbReference type="ChEBI" id="CHEBI:59789"/>
        <dbReference type="ChEBI" id="CHEBI:65315"/>
        <dbReference type="ChEBI" id="CHEBI:74447"/>
        <dbReference type="EC" id="2.1.1.189"/>
    </reaction>
</comment>
<comment type="similarity">
    <text evidence="2">Belongs to the class I-like SAM-binding methyltransferase superfamily. RNA M5U methyltransferase family.</text>
</comment>
<gene>
    <name type="ordered locus">PF0827</name>
</gene>
<proteinExistence type="inferred from homology"/>
<reference key="1">
    <citation type="journal article" date="1999" name="Genetics">
        <title>Divergence of the hyperthermophilic archaea Pyrococcus furiosus and P. horikoshii inferred from complete genomic sequences.</title>
        <authorList>
            <person name="Maeder D.L."/>
            <person name="Weiss R.B."/>
            <person name="Dunn D.M."/>
            <person name="Cherry J.L."/>
            <person name="Gonzalez J.M."/>
            <person name="DiRuggiero J."/>
            <person name="Robb F.T."/>
        </authorList>
    </citation>
    <scope>NUCLEOTIDE SEQUENCE [LARGE SCALE GENOMIC DNA]</scope>
    <source>
        <strain>ATCC 43587 / DSM 3638 / JCM 8422 / Vc1</strain>
    </source>
</reference>
<feature type="chain" id="PRO_0000162055" description="23S rRNA (uracil(747)-C(5))-methyltransferase">
    <location>
        <begin position="1"/>
        <end position="409"/>
    </location>
</feature>
<feature type="active site" description="Nucleophile" evidence="2">
    <location>
        <position position="365"/>
    </location>
</feature>
<feature type="binding site" evidence="1">
    <location>
        <position position="61"/>
    </location>
    <ligand>
        <name>[4Fe-4S] cluster</name>
        <dbReference type="ChEBI" id="CHEBI:49883"/>
    </ligand>
</feature>
<feature type="binding site" evidence="1">
    <location>
        <position position="67"/>
    </location>
    <ligand>
        <name>[4Fe-4S] cluster</name>
        <dbReference type="ChEBI" id="CHEBI:49883"/>
    </ligand>
</feature>
<feature type="binding site" evidence="1">
    <location>
        <position position="70"/>
    </location>
    <ligand>
        <name>[4Fe-4S] cluster</name>
        <dbReference type="ChEBI" id="CHEBI:49883"/>
    </ligand>
</feature>
<feature type="binding site" evidence="1">
    <location>
        <position position="137"/>
    </location>
    <ligand>
        <name>[4Fe-4S] cluster</name>
        <dbReference type="ChEBI" id="CHEBI:49883"/>
    </ligand>
</feature>
<feature type="binding site" evidence="2">
    <location>
        <position position="251"/>
    </location>
    <ligand>
        <name>S-adenosyl-L-methionine</name>
        <dbReference type="ChEBI" id="CHEBI:59789"/>
    </ligand>
</feature>
<feature type="binding site" evidence="2">
    <location>
        <position position="277"/>
    </location>
    <ligand>
        <name>S-adenosyl-L-methionine</name>
        <dbReference type="ChEBI" id="CHEBI:59789"/>
    </ligand>
</feature>
<feature type="binding site" evidence="2">
    <location>
        <position position="298"/>
    </location>
    <ligand>
        <name>S-adenosyl-L-methionine</name>
        <dbReference type="ChEBI" id="CHEBI:59789"/>
    </ligand>
</feature>
<feature type="binding site" evidence="2">
    <location>
        <position position="339"/>
    </location>
    <ligand>
        <name>S-adenosyl-L-methionine</name>
        <dbReference type="ChEBI" id="CHEBI:59789"/>
    </ligand>
</feature>
<sequence length="409" mass="46868">MRGIIEDLSQDGLGVINGIEVPFCYPGDEVRITRTRDRFGRKMASEFSLITPSPLRQRPRCRHYGKCGGCLWQGMKYEEQLKFKKELFRRITGIEAEILGSPRIWEFRNISNFIVSVNGIGLKEFARPKTVVDLKECPVFSNRTPLYIRAMKEFLRESGLKPWNWKEGDVHYLQVREGKFTGEVMVNIIAHRPPEETILEYFPFADSVYWSIKRDKRDDPSGEPIHLGEKEFISEKIFGIKYLLRPGIFFQTNSYALPLLLKAVEGFLDGSKVLDLYSGIGTFSLYLTKKGFNVVGVEINKTAVEVAKLSAELNSLNVEFKAKRAEEENIEGYDALILDPPRKGLGEFAGVVEKKGPENVVYVSCNPKRFILDFKNYLSRSYKVEDAILIDMFPHTPHVEAVIKLRKYS</sequence>
<organism>
    <name type="scientific">Pyrococcus furiosus (strain ATCC 43587 / DSM 3638 / JCM 8422 / Vc1)</name>
    <dbReference type="NCBI Taxonomy" id="186497"/>
    <lineage>
        <taxon>Archaea</taxon>
        <taxon>Methanobacteriati</taxon>
        <taxon>Methanobacteriota</taxon>
        <taxon>Thermococci</taxon>
        <taxon>Thermococcales</taxon>
        <taxon>Thermococcaceae</taxon>
        <taxon>Pyrococcus</taxon>
    </lineage>
</organism>
<dbReference type="EC" id="2.1.1.189"/>
<dbReference type="EMBL" id="AE009950">
    <property type="protein sequence ID" value="AAL80951.1"/>
    <property type="molecule type" value="Genomic_DNA"/>
</dbReference>
<dbReference type="SMR" id="Q8U2K7"/>
<dbReference type="STRING" id="186497.PF0827"/>
<dbReference type="PaxDb" id="186497-PF0827"/>
<dbReference type="KEGG" id="pfu:PF0827"/>
<dbReference type="PATRIC" id="fig|186497.12.peg.875"/>
<dbReference type="eggNOG" id="arCOG00122">
    <property type="taxonomic scope" value="Archaea"/>
</dbReference>
<dbReference type="HOGENOM" id="CLU_014689_8_1_2"/>
<dbReference type="OrthoDB" id="85343at2157"/>
<dbReference type="PhylomeDB" id="Q8U2K7"/>
<dbReference type="Proteomes" id="UP000001013">
    <property type="component" value="Chromosome"/>
</dbReference>
<dbReference type="GO" id="GO:0051539">
    <property type="term" value="F:4 iron, 4 sulfur cluster binding"/>
    <property type="evidence" value="ECO:0007669"/>
    <property type="project" value="UniProtKB-KW"/>
</dbReference>
<dbReference type="GO" id="GO:0046872">
    <property type="term" value="F:metal ion binding"/>
    <property type="evidence" value="ECO:0007669"/>
    <property type="project" value="UniProtKB-KW"/>
</dbReference>
<dbReference type="GO" id="GO:0070041">
    <property type="term" value="F:rRNA (uridine-C5-)-methyltransferase activity"/>
    <property type="evidence" value="ECO:0000250"/>
    <property type="project" value="UniProtKB"/>
</dbReference>
<dbReference type="GO" id="GO:0031167">
    <property type="term" value="P:rRNA methylation"/>
    <property type="evidence" value="ECO:0000250"/>
    <property type="project" value="UniProtKB"/>
</dbReference>
<dbReference type="CDD" id="cd02440">
    <property type="entry name" value="AdoMet_MTases"/>
    <property type="match status" value="1"/>
</dbReference>
<dbReference type="FunFam" id="2.40.50.1070:FF:000008">
    <property type="entry name" value="23S rRNA (uracil(747)-C(5))-methyltransferase"/>
    <property type="match status" value="1"/>
</dbReference>
<dbReference type="FunFam" id="2.40.50.140:FF:000439">
    <property type="entry name" value="23S rRNA (uracil(747)-C(5))-methyltransferase"/>
    <property type="match status" value="1"/>
</dbReference>
<dbReference type="Gene3D" id="2.40.50.1070">
    <property type="match status" value="1"/>
</dbReference>
<dbReference type="Gene3D" id="2.40.50.140">
    <property type="entry name" value="Nucleic acid-binding proteins"/>
    <property type="match status" value="1"/>
</dbReference>
<dbReference type="Gene3D" id="3.40.50.150">
    <property type="entry name" value="Vaccinia Virus protein VP39"/>
    <property type="match status" value="1"/>
</dbReference>
<dbReference type="InterPro" id="IPR030390">
    <property type="entry name" value="MeTrfase_TrmA_AS"/>
</dbReference>
<dbReference type="InterPro" id="IPR030391">
    <property type="entry name" value="MeTrfase_TrmA_CS"/>
</dbReference>
<dbReference type="InterPro" id="IPR012340">
    <property type="entry name" value="NA-bd_OB-fold"/>
</dbReference>
<dbReference type="InterPro" id="IPR048845">
    <property type="entry name" value="RUMT_ARLMC_TRAM_dom"/>
</dbReference>
<dbReference type="InterPro" id="IPR029063">
    <property type="entry name" value="SAM-dependent_MTases_sf"/>
</dbReference>
<dbReference type="InterPro" id="IPR010280">
    <property type="entry name" value="U5_MeTrfase_fam"/>
</dbReference>
<dbReference type="NCBIfam" id="TIGR00479">
    <property type="entry name" value="rumA"/>
    <property type="match status" value="1"/>
</dbReference>
<dbReference type="PANTHER" id="PTHR11061">
    <property type="entry name" value="RNA M5U METHYLTRANSFERASE"/>
    <property type="match status" value="1"/>
</dbReference>
<dbReference type="PANTHER" id="PTHR11061:SF30">
    <property type="entry name" value="TRNA (URACIL(54)-C(5))-METHYLTRANSFERASE"/>
    <property type="match status" value="1"/>
</dbReference>
<dbReference type="Pfam" id="PF21579">
    <property type="entry name" value="PabTrmU54_TRAM_dom"/>
    <property type="match status" value="1"/>
</dbReference>
<dbReference type="Pfam" id="PF05958">
    <property type="entry name" value="tRNA_U5-meth_tr"/>
    <property type="match status" value="2"/>
</dbReference>
<dbReference type="SUPFAM" id="SSF53335">
    <property type="entry name" value="S-adenosyl-L-methionine-dependent methyltransferases"/>
    <property type="match status" value="1"/>
</dbReference>
<dbReference type="PROSITE" id="PS51687">
    <property type="entry name" value="SAM_MT_RNA_M5U"/>
    <property type="match status" value="1"/>
</dbReference>
<dbReference type="PROSITE" id="PS01230">
    <property type="entry name" value="TRMA_1"/>
    <property type="match status" value="1"/>
</dbReference>
<dbReference type="PROSITE" id="PS01231">
    <property type="entry name" value="TRMA_2"/>
    <property type="match status" value="1"/>
</dbReference>
<keyword id="KW-0004">4Fe-4S</keyword>
<keyword id="KW-0408">Iron</keyword>
<keyword id="KW-0411">Iron-sulfur</keyword>
<keyword id="KW-0479">Metal-binding</keyword>
<keyword id="KW-0489">Methyltransferase</keyword>
<keyword id="KW-1185">Reference proteome</keyword>
<keyword id="KW-0698">rRNA processing</keyword>
<keyword id="KW-0949">S-adenosyl-L-methionine</keyword>
<keyword id="KW-0808">Transferase</keyword>
<protein>
    <recommendedName>
        <fullName>23S rRNA (uracil(747)-C(5))-methyltransferase</fullName>
        <ecNumber>2.1.1.189</ecNumber>
    </recommendedName>
    <alternativeName>
        <fullName>23S rRNA(m5U747)-methyltransferase</fullName>
    </alternativeName>
</protein>
<name>ARLMC_PYRFU</name>